<sequence>MLVKADMTKDIAQVMAEVGRKAKAAAAPLSIATSEQKNKALNAAADAILEARADILEANRLDLANAEKNGMAASFVDRLTLNEARIDAIAEDIRAIATLPDPVGEVIAEWDRPNGLHIERVRTPLGVIGVIYESRPNVTADAGALCLKAGNAVILRGGSDSAHSSAAIHKALVKGLEAANLPADAIQIVPVTDRAAVGEMLKGLGGAIDVIVPRGGKSLVARVQSEARVPVFAHLEGICHLYIDKSADLDMARRIALDAKMRRTGICGAAETLLVDRAVASTHLAPILGDLAAGGCEIRGSAEVLALYPAAKPATEEDWSTEYLDAIISVALVDGISGAIDHINRYSSHHTEAIVAEDAQTVARFFNEIDSAILLHNASTQFADGGEFGMGAEIGIATGKMHARGPVGVEQLTSFKYRVRGSGQVRG</sequence>
<keyword id="KW-0028">Amino-acid biosynthesis</keyword>
<keyword id="KW-0963">Cytoplasm</keyword>
<keyword id="KW-0521">NADP</keyword>
<keyword id="KW-0560">Oxidoreductase</keyword>
<keyword id="KW-0641">Proline biosynthesis</keyword>
<keyword id="KW-1185">Reference proteome</keyword>
<proteinExistence type="inferred from homology"/>
<accession>A9M880</accession>
<evidence type="ECO:0000255" key="1">
    <source>
        <dbReference type="HAMAP-Rule" id="MF_00412"/>
    </source>
</evidence>
<reference key="1">
    <citation type="submission" date="2007-10" db="EMBL/GenBank/DDBJ databases">
        <title>Brucella canis ATCC 23365 whole genome shotgun sequencing project.</title>
        <authorList>
            <person name="Setubal J.C."/>
            <person name="Bowns C."/>
            <person name="Boyle S."/>
            <person name="Crasta O.R."/>
            <person name="Czar M.J."/>
            <person name="Dharmanolla C."/>
            <person name="Gillespie J.J."/>
            <person name="Kenyon R.W."/>
            <person name="Lu J."/>
            <person name="Mane S."/>
            <person name="Mohapatra S."/>
            <person name="Nagrani S."/>
            <person name="Purkayastha A."/>
            <person name="Rajasimha H.K."/>
            <person name="Shallom J.M."/>
            <person name="Shallom S."/>
            <person name="Shukla M."/>
            <person name="Snyder E.E."/>
            <person name="Sobral B.W."/>
            <person name="Wattam A.R."/>
            <person name="Will R."/>
            <person name="Williams K."/>
            <person name="Yoo H."/>
            <person name="Bruce D."/>
            <person name="Detter C."/>
            <person name="Munk C."/>
            <person name="Brettin T.S."/>
        </authorList>
    </citation>
    <scope>NUCLEOTIDE SEQUENCE [LARGE SCALE GENOMIC DNA]</scope>
    <source>
        <strain>ATCC 23365 / NCTC 10854 / RM-666</strain>
    </source>
</reference>
<name>PROA_BRUC2</name>
<organism>
    <name type="scientific">Brucella canis (strain ATCC 23365 / NCTC 10854 / RM-666)</name>
    <dbReference type="NCBI Taxonomy" id="483179"/>
    <lineage>
        <taxon>Bacteria</taxon>
        <taxon>Pseudomonadati</taxon>
        <taxon>Pseudomonadota</taxon>
        <taxon>Alphaproteobacteria</taxon>
        <taxon>Hyphomicrobiales</taxon>
        <taxon>Brucellaceae</taxon>
        <taxon>Brucella/Ochrobactrum group</taxon>
        <taxon>Brucella</taxon>
    </lineage>
</organism>
<comment type="function">
    <text evidence="1">Catalyzes the NADPH-dependent reduction of L-glutamate 5-phosphate into L-glutamate 5-semialdehyde and phosphate. The product spontaneously undergoes cyclization to form 1-pyrroline-5-carboxylate.</text>
</comment>
<comment type="catalytic activity">
    <reaction evidence="1">
        <text>L-glutamate 5-semialdehyde + phosphate + NADP(+) = L-glutamyl 5-phosphate + NADPH + H(+)</text>
        <dbReference type="Rhea" id="RHEA:19541"/>
        <dbReference type="ChEBI" id="CHEBI:15378"/>
        <dbReference type="ChEBI" id="CHEBI:43474"/>
        <dbReference type="ChEBI" id="CHEBI:57783"/>
        <dbReference type="ChEBI" id="CHEBI:58066"/>
        <dbReference type="ChEBI" id="CHEBI:58274"/>
        <dbReference type="ChEBI" id="CHEBI:58349"/>
        <dbReference type="EC" id="1.2.1.41"/>
    </reaction>
</comment>
<comment type="pathway">
    <text evidence="1">Amino-acid biosynthesis; L-proline biosynthesis; L-glutamate 5-semialdehyde from L-glutamate: step 2/2.</text>
</comment>
<comment type="subcellular location">
    <subcellularLocation>
        <location evidence="1">Cytoplasm</location>
    </subcellularLocation>
</comment>
<comment type="similarity">
    <text evidence="1">Belongs to the gamma-glutamyl phosphate reductase family.</text>
</comment>
<protein>
    <recommendedName>
        <fullName evidence="1">Gamma-glutamyl phosphate reductase</fullName>
        <shortName evidence="1">GPR</shortName>
        <ecNumber evidence="1">1.2.1.41</ecNumber>
    </recommendedName>
    <alternativeName>
        <fullName evidence="1">Glutamate-5-semialdehyde dehydrogenase</fullName>
    </alternativeName>
    <alternativeName>
        <fullName evidence="1">Glutamyl-gamma-semialdehyde dehydrogenase</fullName>
        <shortName evidence="1">GSA dehydrogenase</shortName>
    </alternativeName>
</protein>
<dbReference type="EC" id="1.2.1.41" evidence="1"/>
<dbReference type="EMBL" id="CP000872">
    <property type="protein sequence ID" value="ABX62878.1"/>
    <property type="molecule type" value="Genomic_DNA"/>
</dbReference>
<dbReference type="RefSeq" id="WP_006132919.1">
    <property type="nucleotide sequence ID" value="NC_010103.1"/>
</dbReference>
<dbReference type="SMR" id="A9M880"/>
<dbReference type="GeneID" id="55591438"/>
<dbReference type="KEGG" id="bcs:BCAN_A1881"/>
<dbReference type="HOGENOM" id="CLU_030231_0_0_5"/>
<dbReference type="UniPathway" id="UPA00098">
    <property type="reaction ID" value="UER00360"/>
</dbReference>
<dbReference type="Proteomes" id="UP000001385">
    <property type="component" value="Chromosome I"/>
</dbReference>
<dbReference type="GO" id="GO:0005737">
    <property type="term" value="C:cytoplasm"/>
    <property type="evidence" value="ECO:0007669"/>
    <property type="project" value="UniProtKB-SubCell"/>
</dbReference>
<dbReference type="GO" id="GO:0004350">
    <property type="term" value="F:glutamate-5-semialdehyde dehydrogenase activity"/>
    <property type="evidence" value="ECO:0007669"/>
    <property type="project" value="UniProtKB-UniRule"/>
</dbReference>
<dbReference type="GO" id="GO:0050661">
    <property type="term" value="F:NADP binding"/>
    <property type="evidence" value="ECO:0007669"/>
    <property type="project" value="InterPro"/>
</dbReference>
<dbReference type="GO" id="GO:0055129">
    <property type="term" value="P:L-proline biosynthetic process"/>
    <property type="evidence" value="ECO:0007669"/>
    <property type="project" value="UniProtKB-UniRule"/>
</dbReference>
<dbReference type="CDD" id="cd07079">
    <property type="entry name" value="ALDH_F18-19_ProA-GPR"/>
    <property type="match status" value="1"/>
</dbReference>
<dbReference type="Gene3D" id="3.40.605.10">
    <property type="entry name" value="Aldehyde Dehydrogenase, Chain A, domain 1"/>
    <property type="match status" value="1"/>
</dbReference>
<dbReference type="Gene3D" id="3.40.309.10">
    <property type="entry name" value="Aldehyde Dehydrogenase, Chain A, domain 2"/>
    <property type="match status" value="1"/>
</dbReference>
<dbReference type="HAMAP" id="MF_00412">
    <property type="entry name" value="ProA"/>
    <property type="match status" value="1"/>
</dbReference>
<dbReference type="InterPro" id="IPR016161">
    <property type="entry name" value="Ald_DH/histidinol_DH"/>
</dbReference>
<dbReference type="InterPro" id="IPR016163">
    <property type="entry name" value="Ald_DH_C"/>
</dbReference>
<dbReference type="InterPro" id="IPR016162">
    <property type="entry name" value="Ald_DH_N"/>
</dbReference>
<dbReference type="InterPro" id="IPR015590">
    <property type="entry name" value="Aldehyde_DH_dom"/>
</dbReference>
<dbReference type="InterPro" id="IPR020593">
    <property type="entry name" value="G-glutamylP_reductase_CS"/>
</dbReference>
<dbReference type="InterPro" id="IPR012134">
    <property type="entry name" value="Glu-5-SA_DH"/>
</dbReference>
<dbReference type="InterPro" id="IPR000965">
    <property type="entry name" value="GPR_dom"/>
</dbReference>
<dbReference type="NCBIfam" id="NF001221">
    <property type="entry name" value="PRK00197.1"/>
    <property type="match status" value="1"/>
</dbReference>
<dbReference type="NCBIfam" id="TIGR00407">
    <property type="entry name" value="proA"/>
    <property type="match status" value="1"/>
</dbReference>
<dbReference type="PANTHER" id="PTHR11063:SF8">
    <property type="entry name" value="DELTA-1-PYRROLINE-5-CARBOXYLATE SYNTHASE"/>
    <property type="match status" value="1"/>
</dbReference>
<dbReference type="PANTHER" id="PTHR11063">
    <property type="entry name" value="GLUTAMATE SEMIALDEHYDE DEHYDROGENASE"/>
    <property type="match status" value="1"/>
</dbReference>
<dbReference type="Pfam" id="PF00171">
    <property type="entry name" value="Aldedh"/>
    <property type="match status" value="1"/>
</dbReference>
<dbReference type="PIRSF" id="PIRSF000151">
    <property type="entry name" value="GPR"/>
    <property type="match status" value="1"/>
</dbReference>
<dbReference type="SUPFAM" id="SSF53720">
    <property type="entry name" value="ALDH-like"/>
    <property type="match status" value="1"/>
</dbReference>
<dbReference type="PROSITE" id="PS01223">
    <property type="entry name" value="PROA"/>
    <property type="match status" value="1"/>
</dbReference>
<feature type="chain" id="PRO_1000080476" description="Gamma-glutamyl phosphate reductase">
    <location>
        <begin position="1"/>
        <end position="427"/>
    </location>
</feature>
<gene>
    <name evidence="1" type="primary">proA</name>
    <name type="ordered locus">BCAN_A1881</name>
</gene>